<feature type="chain" id="PRO_0000165651" description="RuvB-like helicase 1">
    <location>
        <begin position="1"/>
        <end position="457"/>
    </location>
</feature>
<feature type="binding site" evidence="1">
    <location>
        <begin position="73"/>
        <end position="80"/>
    </location>
    <ligand>
        <name>ATP</name>
        <dbReference type="ChEBI" id="CHEBI:30616"/>
    </ligand>
</feature>
<evidence type="ECO:0000250" key="1"/>
<evidence type="ECO:0000305" key="2"/>
<name>RUVB1_CANGA</name>
<keyword id="KW-0010">Activator</keyword>
<keyword id="KW-0067">ATP-binding</keyword>
<keyword id="KW-0156">Chromatin regulator</keyword>
<keyword id="KW-0227">DNA damage</keyword>
<keyword id="KW-0234">DNA repair</keyword>
<keyword id="KW-0347">Helicase</keyword>
<keyword id="KW-0378">Hydrolase</keyword>
<keyword id="KW-0547">Nucleotide-binding</keyword>
<keyword id="KW-0539">Nucleus</keyword>
<keyword id="KW-1185">Reference proteome</keyword>
<keyword id="KW-0804">Transcription</keyword>
<keyword id="KW-0805">Transcription regulation</keyword>
<accession>Q6FU78</accession>
<gene>
    <name type="primary">RVB1</name>
    <name type="ordered locus">CAGL0F05643g</name>
</gene>
<sequence length="457" mass="49849">MVQITEVNESKAGTANRTAAHTHIKGLGLDDTGAARQVEGGFVGQVEAREACGVIVDLIKAKKMSGRAILLAGGPSTGKTALALAISQELGPKVPFCPLVGSELYSVEVKKTETLMENFRRAIGLRIKETKEVYEGEVTELTPEDAENPLGGYGKTISHVIVGLKSAKGTKTLRLDPTIYDSIQKEKVSIGDVIYIEANTGAVKRVGRSDAYATEFDLEAEEYVPLPKGEVHKKKEIVQDVTLHDLDIANARPQGGQDVISMMGQLMKPKKTEITEKLRFEVNKVVAKYVDQGVAELIPGVLFIDEANMLDIEIFTYLNKALESDIAPIVVLASNRGMTTVRGTEDVISPHGIPADLIDRLLIVRTLPYNKDEIRLIIERRSAVENLALEDGALDILADMATHTSLRYALQLLSPAGILSSTAGRQKITIDDINEAKMLFIDAKRSTKILENSDRYM</sequence>
<protein>
    <recommendedName>
        <fullName>RuvB-like helicase 1</fullName>
        <ecNumber>3.6.4.12</ecNumber>
    </recommendedName>
</protein>
<reference key="1">
    <citation type="journal article" date="2004" name="Nature">
        <title>Genome evolution in yeasts.</title>
        <authorList>
            <person name="Dujon B."/>
            <person name="Sherman D."/>
            <person name="Fischer G."/>
            <person name="Durrens P."/>
            <person name="Casaregola S."/>
            <person name="Lafontaine I."/>
            <person name="de Montigny J."/>
            <person name="Marck C."/>
            <person name="Neuveglise C."/>
            <person name="Talla E."/>
            <person name="Goffard N."/>
            <person name="Frangeul L."/>
            <person name="Aigle M."/>
            <person name="Anthouard V."/>
            <person name="Babour A."/>
            <person name="Barbe V."/>
            <person name="Barnay S."/>
            <person name="Blanchin S."/>
            <person name="Beckerich J.-M."/>
            <person name="Beyne E."/>
            <person name="Bleykasten C."/>
            <person name="Boisrame A."/>
            <person name="Boyer J."/>
            <person name="Cattolico L."/>
            <person name="Confanioleri F."/>
            <person name="de Daruvar A."/>
            <person name="Despons L."/>
            <person name="Fabre E."/>
            <person name="Fairhead C."/>
            <person name="Ferry-Dumazet H."/>
            <person name="Groppi A."/>
            <person name="Hantraye F."/>
            <person name="Hennequin C."/>
            <person name="Jauniaux N."/>
            <person name="Joyet P."/>
            <person name="Kachouri R."/>
            <person name="Kerrest A."/>
            <person name="Koszul R."/>
            <person name="Lemaire M."/>
            <person name="Lesur I."/>
            <person name="Ma L."/>
            <person name="Muller H."/>
            <person name="Nicaud J.-M."/>
            <person name="Nikolski M."/>
            <person name="Oztas S."/>
            <person name="Ozier-Kalogeropoulos O."/>
            <person name="Pellenz S."/>
            <person name="Potier S."/>
            <person name="Richard G.-F."/>
            <person name="Straub M.-L."/>
            <person name="Suleau A."/>
            <person name="Swennen D."/>
            <person name="Tekaia F."/>
            <person name="Wesolowski-Louvel M."/>
            <person name="Westhof E."/>
            <person name="Wirth B."/>
            <person name="Zeniou-Meyer M."/>
            <person name="Zivanovic Y."/>
            <person name="Bolotin-Fukuhara M."/>
            <person name="Thierry A."/>
            <person name="Bouchier C."/>
            <person name="Caudron B."/>
            <person name="Scarpelli C."/>
            <person name="Gaillardin C."/>
            <person name="Weissenbach J."/>
            <person name="Wincker P."/>
            <person name="Souciet J.-L."/>
        </authorList>
    </citation>
    <scope>NUCLEOTIDE SEQUENCE [LARGE SCALE GENOMIC DNA]</scope>
    <source>
        <strain>ATCC 2001 / BCRC 20586 / JCM 3761 / NBRC 0622 / NRRL Y-65 / CBS 138</strain>
    </source>
</reference>
<proteinExistence type="inferred from homology"/>
<dbReference type="EC" id="3.6.4.12"/>
<dbReference type="EMBL" id="CR380952">
    <property type="protein sequence ID" value="CAG59140.1"/>
    <property type="molecule type" value="Genomic_DNA"/>
</dbReference>
<dbReference type="RefSeq" id="XP_446216.1">
    <property type="nucleotide sequence ID" value="XM_446216.1"/>
</dbReference>
<dbReference type="SMR" id="Q6FU78"/>
<dbReference type="FunCoup" id="Q6FU78">
    <property type="interactions" value="1737"/>
</dbReference>
<dbReference type="STRING" id="284593.Q6FU78"/>
<dbReference type="EnsemblFungi" id="CAGL0F05643g-T">
    <property type="protein sequence ID" value="CAGL0F05643g-T-p1"/>
    <property type="gene ID" value="CAGL0F05643g"/>
</dbReference>
<dbReference type="KEGG" id="cgr:2887725"/>
<dbReference type="CGD" id="CAL0129272">
    <property type="gene designation" value="CAGL0F05643g"/>
</dbReference>
<dbReference type="VEuPathDB" id="FungiDB:B1J91_F05643g"/>
<dbReference type="VEuPathDB" id="FungiDB:CAGL0F05643g"/>
<dbReference type="eggNOG" id="KOG1942">
    <property type="taxonomic scope" value="Eukaryota"/>
</dbReference>
<dbReference type="HOGENOM" id="CLU_028311_1_1_1"/>
<dbReference type="InParanoid" id="Q6FU78"/>
<dbReference type="OMA" id="RTLPYNK"/>
<dbReference type="Proteomes" id="UP000002428">
    <property type="component" value="Chromosome F"/>
</dbReference>
<dbReference type="GO" id="GO:0031011">
    <property type="term" value="C:Ino80 complex"/>
    <property type="evidence" value="ECO:0007669"/>
    <property type="project" value="EnsemblFungi"/>
</dbReference>
<dbReference type="GO" id="GO:0097255">
    <property type="term" value="C:R2TP complex"/>
    <property type="evidence" value="ECO:0007669"/>
    <property type="project" value="EnsemblFungi"/>
</dbReference>
<dbReference type="GO" id="GO:0000812">
    <property type="term" value="C:Swr1 complex"/>
    <property type="evidence" value="ECO:0007669"/>
    <property type="project" value="EnsemblFungi"/>
</dbReference>
<dbReference type="GO" id="GO:0043138">
    <property type="term" value="F:3'-5' DNA helicase activity"/>
    <property type="evidence" value="ECO:0007669"/>
    <property type="project" value="EnsemblFungi"/>
</dbReference>
<dbReference type="GO" id="GO:0043139">
    <property type="term" value="F:5'-3' DNA helicase activity"/>
    <property type="evidence" value="ECO:0007669"/>
    <property type="project" value="EnsemblFungi"/>
</dbReference>
<dbReference type="GO" id="GO:0005524">
    <property type="term" value="F:ATP binding"/>
    <property type="evidence" value="ECO:0007669"/>
    <property type="project" value="UniProtKB-KW"/>
</dbReference>
<dbReference type="GO" id="GO:0016887">
    <property type="term" value="F:ATP hydrolysis activity"/>
    <property type="evidence" value="ECO:0007669"/>
    <property type="project" value="InterPro"/>
</dbReference>
<dbReference type="GO" id="GO:0000492">
    <property type="term" value="P:box C/D snoRNP assembly"/>
    <property type="evidence" value="ECO:0007669"/>
    <property type="project" value="EnsemblFungi"/>
</dbReference>
<dbReference type="GO" id="GO:0006338">
    <property type="term" value="P:chromatin remodeling"/>
    <property type="evidence" value="ECO:0007669"/>
    <property type="project" value="EnsemblFungi"/>
</dbReference>
<dbReference type="GO" id="GO:0006281">
    <property type="term" value="P:DNA repair"/>
    <property type="evidence" value="ECO:0007669"/>
    <property type="project" value="UniProtKB-KW"/>
</dbReference>
<dbReference type="GO" id="GO:0006357">
    <property type="term" value="P:regulation of transcription by RNA polymerase II"/>
    <property type="evidence" value="ECO:0007669"/>
    <property type="project" value="EnsemblFungi"/>
</dbReference>
<dbReference type="FunFam" id="1.10.8.60:FF:000010">
    <property type="entry name" value="RuvB-like helicase"/>
    <property type="match status" value="1"/>
</dbReference>
<dbReference type="FunFam" id="2.40.50.360:FF:000001">
    <property type="entry name" value="RuvB-like helicase"/>
    <property type="match status" value="1"/>
</dbReference>
<dbReference type="Gene3D" id="1.10.8.60">
    <property type="match status" value="1"/>
</dbReference>
<dbReference type="Gene3D" id="3.40.50.300">
    <property type="entry name" value="P-loop containing nucleotide triphosphate hydrolases"/>
    <property type="match status" value="1"/>
</dbReference>
<dbReference type="Gene3D" id="2.40.50.360">
    <property type="entry name" value="RuvB-like helicase, domain II"/>
    <property type="match status" value="1"/>
</dbReference>
<dbReference type="InterPro" id="IPR003593">
    <property type="entry name" value="AAA+_ATPase"/>
</dbReference>
<dbReference type="InterPro" id="IPR027417">
    <property type="entry name" value="P-loop_NTPase"/>
</dbReference>
<dbReference type="InterPro" id="IPR027238">
    <property type="entry name" value="RuvB-like"/>
</dbReference>
<dbReference type="InterPro" id="IPR041048">
    <property type="entry name" value="RuvB-like_C"/>
</dbReference>
<dbReference type="InterPro" id="IPR042487">
    <property type="entry name" value="RuvBL1/2_DNA/RNA_bd_dom"/>
</dbReference>
<dbReference type="InterPro" id="IPR010339">
    <property type="entry name" value="TIP49_P-loop"/>
</dbReference>
<dbReference type="PANTHER" id="PTHR11093">
    <property type="entry name" value="RUVB-RELATED REPTIN AND PONTIN"/>
    <property type="match status" value="1"/>
</dbReference>
<dbReference type="Pfam" id="PF06068">
    <property type="entry name" value="TIP49"/>
    <property type="match status" value="1"/>
</dbReference>
<dbReference type="Pfam" id="PF17856">
    <property type="entry name" value="TIP49_C"/>
    <property type="match status" value="1"/>
</dbReference>
<dbReference type="SMART" id="SM00382">
    <property type="entry name" value="AAA"/>
    <property type="match status" value="1"/>
</dbReference>
<dbReference type="SUPFAM" id="SSF52540">
    <property type="entry name" value="P-loop containing nucleoside triphosphate hydrolases"/>
    <property type="match status" value="1"/>
</dbReference>
<organism>
    <name type="scientific">Candida glabrata (strain ATCC 2001 / BCRC 20586 / JCM 3761 / NBRC 0622 / NRRL Y-65 / CBS 138)</name>
    <name type="common">Yeast</name>
    <name type="synonym">Nakaseomyces glabratus</name>
    <dbReference type="NCBI Taxonomy" id="284593"/>
    <lineage>
        <taxon>Eukaryota</taxon>
        <taxon>Fungi</taxon>
        <taxon>Dikarya</taxon>
        <taxon>Ascomycota</taxon>
        <taxon>Saccharomycotina</taxon>
        <taxon>Saccharomycetes</taxon>
        <taxon>Saccharomycetales</taxon>
        <taxon>Saccharomycetaceae</taxon>
        <taxon>Nakaseomyces</taxon>
    </lineage>
</organism>
<comment type="function">
    <text evidence="1">DNA helicase which participates in several chromatin remodeling complexes, including the SWR1 and the INO80 complexes. The SWR1 complex mediates the ATP-dependent exchange of histone H2A for the H2A variant HZT1 leading to transcriptional regulation of selected genes by chromatin remodeling. The INO80 complex remodels chromatin by shifting nucleosomes and is involved in DNA repair. Also involved in pre-rRNA processing (By similarity).</text>
</comment>
<comment type="catalytic activity">
    <reaction>
        <text>ATP + H2O = ADP + phosphate + H(+)</text>
        <dbReference type="Rhea" id="RHEA:13065"/>
        <dbReference type="ChEBI" id="CHEBI:15377"/>
        <dbReference type="ChEBI" id="CHEBI:15378"/>
        <dbReference type="ChEBI" id="CHEBI:30616"/>
        <dbReference type="ChEBI" id="CHEBI:43474"/>
        <dbReference type="ChEBI" id="CHEBI:456216"/>
        <dbReference type="EC" id="3.6.4.12"/>
    </reaction>
</comment>
<comment type="subunit">
    <text evidence="1">May form heterododecamers with RVB2. Component of the SWR1 chromatin remodeling complex, the INO80 chromatin remodeling complex, and of the R2TP complex (By similarity).</text>
</comment>
<comment type="subcellular location">
    <subcellularLocation>
        <location evidence="1">Nucleus</location>
    </subcellularLocation>
</comment>
<comment type="similarity">
    <text evidence="2">Belongs to the RuvB family.</text>
</comment>